<sequence length="89" mass="9994">MTELSKPLRRTLVGRVVSDKMQKTVTVLVERQVKHPVIGKYVGQSKKYHAHDEAGTYKMGDTVEIAESKPISRTKSWVVTRLVEASKGI</sequence>
<feature type="chain" id="PRO_1000086848" description="Small ribosomal subunit protein uS17">
    <location>
        <begin position="1"/>
        <end position="89"/>
    </location>
</feature>
<keyword id="KW-1185">Reference proteome</keyword>
<keyword id="KW-0687">Ribonucleoprotein</keyword>
<keyword id="KW-0689">Ribosomal protein</keyword>
<keyword id="KW-0694">RNA-binding</keyword>
<keyword id="KW-0699">rRNA-binding</keyword>
<evidence type="ECO:0000255" key="1">
    <source>
        <dbReference type="HAMAP-Rule" id="MF_01345"/>
    </source>
</evidence>
<evidence type="ECO:0000305" key="2"/>
<reference key="1">
    <citation type="journal article" date="2012" name="Stand. Genomic Sci.">
        <title>Complete genome sequence of Polynucleobacter necessarius subsp. asymbioticus type strain (QLW-P1DMWA-1(T)).</title>
        <authorList>
            <person name="Meincke L."/>
            <person name="Copeland A."/>
            <person name="Lapidus A."/>
            <person name="Lucas S."/>
            <person name="Berry K.W."/>
            <person name="Del Rio T.G."/>
            <person name="Hammon N."/>
            <person name="Dalin E."/>
            <person name="Tice H."/>
            <person name="Pitluck S."/>
            <person name="Richardson P."/>
            <person name="Bruce D."/>
            <person name="Goodwin L."/>
            <person name="Han C."/>
            <person name="Tapia R."/>
            <person name="Detter J.C."/>
            <person name="Schmutz J."/>
            <person name="Brettin T."/>
            <person name="Larimer F."/>
            <person name="Land M."/>
            <person name="Hauser L."/>
            <person name="Kyrpides N.C."/>
            <person name="Ivanova N."/>
            <person name="Goker M."/>
            <person name="Woyke T."/>
            <person name="Wu Q.L."/>
            <person name="Pockl M."/>
            <person name="Hahn M.W."/>
            <person name="Klenk H.P."/>
        </authorList>
    </citation>
    <scope>NUCLEOTIDE SEQUENCE [LARGE SCALE GENOMIC DNA]</scope>
    <source>
        <strain>DSM 18221 / CIP 109841 / QLW-P1DMWA-1</strain>
    </source>
</reference>
<dbReference type="EMBL" id="CP000655">
    <property type="protein sequence ID" value="ABP33284.1"/>
    <property type="molecule type" value="Genomic_DNA"/>
</dbReference>
<dbReference type="RefSeq" id="WP_011901909.1">
    <property type="nucleotide sequence ID" value="NC_009379.1"/>
</dbReference>
<dbReference type="SMR" id="A4SUX0"/>
<dbReference type="GeneID" id="31480408"/>
<dbReference type="KEGG" id="pnu:Pnuc_0062"/>
<dbReference type="eggNOG" id="COG0186">
    <property type="taxonomic scope" value="Bacteria"/>
</dbReference>
<dbReference type="HOGENOM" id="CLU_073626_1_1_4"/>
<dbReference type="Proteomes" id="UP000000231">
    <property type="component" value="Chromosome"/>
</dbReference>
<dbReference type="GO" id="GO:0022627">
    <property type="term" value="C:cytosolic small ribosomal subunit"/>
    <property type="evidence" value="ECO:0007669"/>
    <property type="project" value="TreeGrafter"/>
</dbReference>
<dbReference type="GO" id="GO:0019843">
    <property type="term" value="F:rRNA binding"/>
    <property type="evidence" value="ECO:0007669"/>
    <property type="project" value="UniProtKB-UniRule"/>
</dbReference>
<dbReference type="GO" id="GO:0003735">
    <property type="term" value="F:structural constituent of ribosome"/>
    <property type="evidence" value="ECO:0007669"/>
    <property type="project" value="InterPro"/>
</dbReference>
<dbReference type="GO" id="GO:0006412">
    <property type="term" value="P:translation"/>
    <property type="evidence" value="ECO:0007669"/>
    <property type="project" value="UniProtKB-UniRule"/>
</dbReference>
<dbReference type="CDD" id="cd00364">
    <property type="entry name" value="Ribosomal_uS17"/>
    <property type="match status" value="1"/>
</dbReference>
<dbReference type="Gene3D" id="2.40.50.140">
    <property type="entry name" value="Nucleic acid-binding proteins"/>
    <property type="match status" value="1"/>
</dbReference>
<dbReference type="HAMAP" id="MF_01345_B">
    <property type="entry name" value="Ribosomal_uS17_B"/>
    <property type="match status" value="1"/>
</dbReference>
<dbReference type="InterPro" id="IPR012340">
    <property type="entry name" value="NA-bd_OB-fold"/>
</dbReference>
<dbReference type="InterPro" id="IPR000266">
    <property type="entry name" value="Ribosomal_uS17"/>
</dbReference>
<dbReference type="InterPro" id="IPR019984">
    <property type="entry name" value="Ribosomal_uS17_bact/chlr"/>
</dbReference>
<dbReference type="InterPro" id="IPR019979">
    <property type="entry name" value="Ribosomal_uS17_CS"/>
</dbReference>
<dbReference type="NCBIfam" id="NF004123">
    <property type="entry name" value="PRK05610.1"/>
    <property type="match status" value="1"/>
</dbReference>
<dbReference type="NCBIfam" id="TIGR03635">
    <property type="entry name" value="uS17_bact"/>
    <property type="match status" value="1"/>
</dbReference>
<dbReference type="PANTHER" id="PTHR10744">
    <property type="entry name" value="40S RIBOSOMAL PROTEIN S11 FAMILY MEMBER"/>
    <property type="match status" value="1"/>
</dbReference>
<dbReference type="PANTHER" id="PTHR10744:SF1">
    <property type="entry name" value="SMALL RIBOSOMAL SUBUNIT PROTEIN US17M"/>
    <property type="match status" value="1"/>
</dbReference>
<dbReference type="Pfam" id="PF00366">
    <property type="entry name" value="Ribosomal_S17"/>
    <property type="match status" value="1"/>
</dbReference>
<dbReference type="PRINTS" id="PR00973">
    <property type="entry name" value="RIBOSOMALS17"/>
</dbReference>
<dbReference type="SUPFAM" id="SSF50249">
    <property type="entry name" value="Nucleic acid-binding proteins"/>
    <property type="match status" value="1"/>
</dbReference>
<dbReference type="PROSITE" id="PS00056">
    <property type="entry name" value="RIBOSOMAL_S17"/>
    <property type="match status" value="1"/>
</dbReference>
<gene>
    <name evidence="1" type="primary">rpsQ</name>
    <name type="ordered locus">Pnuc_0062</name>
</gene>
<organism>
    <name type="scientific">Polynucleobacter asymbioticus (strain DSM 18221 / CIP 109841 / QLW-P1DMWA-1)</name>
    <name type="common">Polynucleobacter necessarius subsp. asymbioticus</name>
    <dbReference type="NCBI Taxonomy" id="312153"/>
    <lineage>
        <taxon>Bacteria</taxon>
        <taxon>Pseudomonadati</taxon>
        <taxon>Pseudomonadota</taxon>
        <taxon>Betaproteobacteria</taxon>
        <taxon>Burkholderiales</taxon>
        <taxon>Burkholderiaceae</taxon>
        <taxon>Polynucleobacter</taxon>
    </lineage>
</organism>
<accession>A4SUX0</accession>
<name>RS17_POLAQ</name>
<comment type="function">
    <text evidence="1">One of the primary rRNA binding proteins, it binds specifically to the 5'-end of 16S ribosomal RNA.</text>
</comment>
<comment type="subunit">
    <text evidence="1">Part of the 30S ribosomal subunit.</text>
</comment>
<comment type="similarity">
    <text evidence="1">Belongs to the universal ribosomal protein uS17 family.</text>
</comment>
<protein>
    <recommendedName>
        <fullName evidence="1">Small ribosomal subunit protein uS17</fullName>
    </recommendedName>
    <alternativeName>
        <fullName evidence="2">30S ribosomal protein S17</fullName>
    </alternativeName>
</protein>
<proteinExistence type="inferred from homology"/>